<reference key="1">
    <citation type="submission" date="2006-12" db="EMBL/GenBank/DDBJ databases">
        <authorList>
            <person name="Fouts D.E."/>
            <person name="Nelson K.E."/>
            <person name="Sebastian Y."/>
        </authorList>
    </citation>
    <scope>NUCLEOTIDE SEQUENCE [LARGE SCALE GENOMIC DNA]</scope>
    <source>
        <strain>81-176</strain>
    </source>
</reference>
<name>PDXA_CAMJJ</name>
<comment type="function">
    <text evidence="1">Catalyzes the NAD(P)-dependent oxidation of 4-(phosphooxy)-L-threonine (HTP) into 2-amino-3-oxo-4-(phosphooxy)butyric acid which spontaneously decarboxylates to form 3-amino-2-oxopropyl phosphate (AHAP).</text>
</comment>
<comment type="catalytic activity">
    <reaction evidence="1">
        <text>4-(phosphooxy)-L-threonine + NAD(+) = 3-amino-2-oxopropyl phosphate + CO2 + NADH</text>
        <dbReference type="Rhea" id="RHEA:32275"/>
        <dbReference type="ChEBI" id="CHEBI:16526"/>
        <dbReference type="ChEBI" id="CHEBI:57279"/>
        <dbReference type="ChEBI" id="CHEBI:57540"/>
        <dbReference type="ChEBI" id="CHEBI:57945"/>
        <dbReference type="ChEBI" id="CHEBI:58452"/>
        <dbReference type="EC" id="1.1.1.262"/>
    </reaction>
</comment>
<comment type="cofactor">
    <cofactor evidence="1">
        <name>Zn(2+)</name>
        <dbReference type="ChEBI" id="CHEBI:29105"/>
    </cofactor>
    <cofactor evidence="1">
        <name>Mg(2+)</name>
        <dbReference type="ChEBI" id="CHEBI:18420"/>
    </cofactor>
    <cofactor evidence="1">
        <name>Co(2+)</name>
        <dbReference type="ChEBI" id="CHEBI:48828"/>
    </cofactor>
</comment>
<comment type="pathway">
    <text evidence="1">Cofactor biosynthesis; pyridoxine 5'-phosphate biosynthesis; pyridoxine 5'-phosphate from D-erythrose 4-phosphate: step 4/5.</text>
</comment>
<comment type="subunit">
    <text evidence="1">Homodimer.</text>
</comment>
<comment type="subcellular location">
    <subcellularLocation>
        <location evidence="1">Cytoplasm</location>
    </subcellularLocation>
</comment>
<comment type="miscellaneous">
    <text evidence="1">The active site is located at the dimer interface.</text>
</comment>
<comment type="similarity">
    <text evidence="1">Belongs to the PdxA family.</text>
</comment>
<organism>
    <name type="scientific">Campylobacter jejuni subsp. jejuni serotype O:23/36 (strain 81-176)</name>
    <dbReference type="NCBI Taxonomy" id="354242"/>
    <lineage>
        <taxon>Bacteria</taxon>
        <taxon>Pseudomonadati</taxon>
        <taxon>Campylobacterota</taxon>
        <taxon>Epsilonproteobacteria</taxon>
        <taxon>Campylobacterales</taxon>
        <taxon>Campylobacteraceae</taxon>
        <taxon>Campylobacter</taxon>
    </lineage>
</organism>
<evidence type="ECO:0000255" key="1">
    <source>
        <dbReference type="HAMAP-Rule" id="MF_02086"/>
    </source>
</evidence>
<gene>
    <name evidence="1" type="primary">pdxA</name>
    <name type="ordered locus">CJJ81176_1253</name>
</gene>
<protein>
    <recommendedName>
        <fullName evidence="1">4-hydroxythreonine-4-phosphate dehydrogenase</fullName>
        <ecNumber evidence="1">1.1.1.262</ecNumber>
    </recommendedName>
    <alternativeName>
        <fullName evidence="1">4-(phosphohydroxy)-L-threonine dehydrogenase</fullName>
    </alternativeName>
</protein>
<keyword id="KW-0170">Cobalt</keyword>
<keyword id="KW-0963">Cytoplasm</keyword>
<keyword id="KW-0460">Magnesium</keyword>
<keyword id="KW-0479">Metal-binding</keyword>
<keyword id="KW-0520">NAD</keyword>
<keyword id="KW-0521">NADP</keyword>
<keyword id="KW-0560">Oxidoreductase</keyword>
<keyword id="KW-0664">Pyridoxine biosynthesis</keyword>
<keyword id="KW-0862">Zinc</keyword>
<feature type="chain" id="PRO_1000051493" description="4-hydroxythreonine-4-phosphate dehydrogenase">
    <location>
        <begin position="1"/>
        <end position="364"/>
    </location>
</feature>
<feature type="binding site" evidence="1">
    <location>
        <position position="148"/>
    </location>
    <ligand>
        <name>substrate</name>
    </ligand>
</feature>
<feature type="binding site" evidence="1">
    <location>
        <position position="149"/>
    </location>
    <ligand>
        <name>substrate</name>
    </ligand>
</feature>
<feature type="binding site" evidence="1">
    <location>
        <position position="177"/>
    </location>
    <ligand>
        <name>a divalent metal cation</name>
        <dbReference type="ChEBI" id="CHEBI:60240"/>
        <note>ligand shared between dimeric partners</note>
    </ligand>
</feature>
<feature type="binding site" evidence="1">
    <location>
        <position position="216"/>
    </location>
    <ligand>
        <name>a divalent metal cation</name>
        <dbReference type="ChEBI" id="CHEBI:60240"/>
        <note>ligand shared between dimeric partners</note>
    </ligand>
</feature>
<feature type="binding site" evidence="1">
    <location>
        <position position="301"/>
    </location>
    <ligand>
        <name>a divalent metal cation</name>
        <dbReference type="ChEBI" id="CHEBI:60240"/>
        <note>ligand shared between dimeric partners</note>
    </ligand>
</feature>
<feature type="binding site" evidence="1">
    <location>
        <position position="309"/>
    </location>
    <ligand>
        <name>substrate</name>
    </ligand>
</feature>
<feature type="binding site" evidence="1">
    <location>
        <position position="318"/>
    </location>
    <ligand>
        <name>substrate</name>
    </ligand>
</feature>
<feature type="binding site" evidence="1">
    <location>
        <position position="327"/>
    </location>
    <ligand>
        <name>substrate</name>
    </ligand>
</feature>
<proteinExistence type="inferred from homology"/>
<dbReference type="EC" id="1.1.1.262" evidence="1"/>
<dbReference type="EMBL" id="CP000538">
    <property type="protein sequence ID" value="EAQ72898.1"/>
    <property type="molecule type" value="Genomic_DNA"/>
</dbReference>
<dbReference type="RefSeq" id="WP_002855914.1">
    <property type="nucleotide sequence ID" value="NC_008787.1"/>
</dbReference>
<dbReference type="SMR" id="A1W0M2"/>
<dbReference type="KEGG" id="cjj:CJJ81176_1253"/>
<dbReference type="eggNOG" id="COG1995">
    <property type="taxonomic scope" value="Bacteria"/>
</dbReference>
<dbReference type="HOGENOM" id="CLU_040168_0_0_7"/>
<dbReference type="UniPathway" id="UPA00244">
    <property type="reaction ID" value="UER00312"/>
</dbReference>
<dbReference type="Proteomes" id="UP000000646">
    <property type="component" value="Chromosome"/>
</dbReference>
<dbReference type="GO" id="GO:0005737">
    <property type="term" value="C:cytoplasm"/>
    <property type="evidence" value="ECO:0007669"/>
    <property type="project" value="UniProtKB-SubCell"/>
</dbReference>
<dbReference type="GO" id="GO:0050570">
    <property type="term" value="F:4-hydroxythreonine-4-phosphate dehydrogenase activity"/>
    <property type="evidence" value="ECO:0007669"/>
    <property type="project" value="UniProtKB-UniRule"/>
</dbReference>
<dbReference type="GO" id="GO:0050897">
    <property type="term" value="F:cobalt ion binding"/>
    <property type="evidence" value="ECO:0007669"/>
    <property type="project" value="UniProtKB-UniRule"/>
</dbReference>
<dbReference type="GO" id="GO:0000287">
    <property type="term" value="F:magnesium ion binding"/>
    <property type="evidence" value="ECO:0007669"/>
    <property type="project" value="UniProtKB-UniRule"/>
</dbReference>
<dbReference type="GO" id="GO:0051287">
    <property type="term" value="F:NAD binding"/>
    <property type="evidence" value="ECO:0007669"/>
    <property type="project" value="InterPro"/>
</dbReference>
<dbReference type="GO" id="GO:0008270">
    <property type="term" value="F:zinc ion binding"/>
    <property type="evidence" value="ECO:0007669"/>
    <property type="project" value="UniProtKB-UniRule"/>
</dbReference>
<dbReference type="GO" id="GO:0042823">
    <property type="term" value="P:pyridoxal phosphate biosynthetic process"/>
    <property type="evidence" value="ECO:0007669"/>
    <property type="project" value="UniProtKB-UniRule"/>
</dbReference>
<dbReference type="GO" id="GO:0008615">
    <property type="term" value="P:pyridoxine biosynthetic process"/>
    <property type="evidence" value="ECO:0007669"/>
    <property type="project" value="UniProtKB-UniRule"/>
</dbReference>
<dbReference type="Gene3D" id="3.40.718.10">
    <property type="entry name" value="Isopropylmalate Dehydrogenase"/>
    <property type="match status" value="1"/>
</dbReference>
<dbReference type="HAMAP" id="MF_02086">
    <property type="entry name" value="PdxA_Epsilonprot"/>
    <property type="match status" value="1"/>
</dbReference>
<dbReference type="InterPro" id="IPR037539">
    <property type="entry name" value="PdxA_epsilonprot"/>
</dbReference>
<dbReference type="InterPro" id="IPR005255">
    <property type="entry name" value="PdxA_fam"/>
</dbReference>
<dbReference type="NCBIfam" id="NF003040">
    <property type="entry name" value="PRK03946.1"/>
    <property type="match status" value="1"/>
</dbReference>
<dbReference type="PANTHER" id="PTHR30004">
    <property type="entry name" value="4-HYDROXYTHREONINE-4-PHOSPHATE DEHYDROGENASE"/>
    <property type="match status" value="1"/>
</dbReference>
<dbReference type="PANTHER" id="PTHR30004:SF6">
    <property type="entry name" value="D-THREONATE 4-PHOSPHATE DEHYDROGENASE"/>
    <property type="match status" value="1"/>
</dbReference>
<dbReference type="Pfam" id="PF04166">
    <property type="entry name" value="PdxA"/>
    <property type="match status" value="1"/>
</dbReference>
<dbReference type="SUPFAM" id="SSF53659">
    <property type="entry name" value="Isocitrate/Isopropylmalate dehydrogenase-like"/>
    <property type="match status" value="1"/>
</dbReference>
<accession>A1W0M2</accession>
<sequence>MKKLAISIGDINSIGLEILVRSHEELSKICTPFYFIHESLLNKALKLLNLKLFNAKIVAFKDDKDYEFNFIKKENSLEIYSFCLPLGFKVDENFEIQAGEIDAKSGLYGFLSFKAASYFVYEKHAHALLTLPIHKKAWEDAGLKYKGHTDALRDFFKKNAIMMLGCKELFVGLFSEHIPLAKVSKKITFKNLSIFLKDFYKETHFKKMGLLGFNPHAGDYGVIGGEEEKIMEKAIAFVNAFLHSKKDEKFFKKALKDENLQKELLLNFKGKGVYLPYPLVADTAFTKAGLKNCNRLVAMYHDLALAPLKALYFDKSINVSLNLPIIRVSVDHGTAFDKAYKNAKINTKSYFEAAKFAINLNSKA</sequence>